<keyword id="KW-0025">Alternative splicing</keyword>
<keyword id="KW-0238">DNA-binding</keyword>
<keyword id="KW-0371">Homeobox</keyword>
<keyword id="KW-0539">Nucleus</keyword>
<keyword id="KW-1185">Reference proteome</keyword>
<keyword id="KW-0804">Transcription</keyword>
<keyword id="KW-0805">Transcription regulation</keyword>
<comment type="function">
    <text evidence="4 5 7 8 9 10">Transcription factor, involved in posterior embryonic patterning, morphogenetic movements of the posterior hypodermis, and cell fate specification (PubMed:10781051, PubMed:16824957, PubMed:20824072, PubMed:21408209). Binds to the 5'-TAGT-3' motif in regulatory elements of genes, including Meis protein psa-3 and microRNA mir-57 (PubMed:16824957, PubMed:20824072). Involved in a negative regulatory loop with mir-57 to specify posterior cell identities (PubMed:20824072). Required for asymmetric division of the T hypodermal cell, acting via the regulation of asymmetric expression of psa-3 in cooperation with ceh-20 and the Wnt-MAPK pathway (PubMed:16824957). Involved in the regulation of the onset of non-apoptotic cell death in the linker cell, acting together with the Wnt signaling pathway (PubMed:27472063). Involved in promoting embryogenesis, in concert with orphan nuclear receptor nhr-25 (PubMed:15314147). May regulate expression of transcription factor dmd-3 (PubMed:21408209).</text>
</comment>
<comment type="subunit">
    <text evidence="5 6 7">Interacts with nuclear receptor nhr-25 (PubMed:15314147). Interacts with geminin homolog gmn-1 (PubMed:15811859). Interacts with homeodomain protein ceh-20 (PubMed:16824957).</text>
</comment>
<comment type="subcellular location">
    <subcellularLocation>
        <location evidence="2">Nucleus</location>
    </subcellularLocation>
</comment>
<comment type="alternative products">
    <event type="alternative splicing"/>
    <isoform>
        <id>G5EFY5-1</id>
        <name evidence="15">a</name>
        <sequence type="displayed"/>
    </isoform>
    <isoform>
        <id>G5EFY5-2</id>
        <name evidence="16">b</name>
        <sequence type="described" ref="VSP_061102"/>
    </isoform>
</comment>
<comment type="developmental stage">
    <text evidence="8 9 10">Expressed from the 100-cell stage in posterior progeny of ABp(l/r)pp and ABp(l/r)ap (PubMed:20824072). Expressed in the tail tip cells hyp8-11 throughout larval development in both sexes (PubMed:21408209). Expressed in the linker cell from the L3 larval stage onward (PubMed:27472063).</text>
</comment>
<comment type="induction">
    <molecule>Isoform b</molecule>
    <text evidence="8">Repressed directly by microRNA mir-57.</text>
</comment>
<comment type="disruption phenotype">
    <text evidence="4 8 9">RNAi-mediated knockdown applied to adults causes posterior morphological abnormalities in their F1 progeny (PubMed:10781051). Knockdown by feeding of dsRNA to stage L1 larvae causes defects in tail tip morphogenesis and reduces expression of dmd-3; both of these phenotypes are exacerbated on a php-3 mutant background (PubMed:21408209). Knockdown represses expression of microRNA mir-57 in the AB cell sublineages (PubMed:20824072).</text>
</comment>
<comment type="similarity">
    <text evidence="11">Belongs to the abd-b homeobox family.</text>
</comment>
<comment type="sequence caution" evidence="11">
    <conflict type="miscellaneous discrepancy">
        <sequence resource="EMBL-CDS" id="AAD48875"/>
    </conflict>
    <text>Intron retention.</text>
</comment>
<sequence>MISVMQQMINNDSPEDSKESITSVQQTPFFWPSAAAAIPSIQGESRSERESETGSSPQLAPSSTGMVMPGTAGMYGFGPSRMPTANEFGMMMNPVYTDFYQNPLASTGWYSYGQPYQFTANYSIPSLDGNLSDITIPTTAGSSAATTPNAAMHLPWAISHDGKKKRQPYKKDQISRLEYEYSVNQYLTNKRRSELSAQLMLDEKQVKVWFQNRRMKDKKLRQRHSGPFPHGAPVTPCIERLIN</sequence>
<protein>
    <recommendedName>
        <fullName evidence="11">Homeobox protein nob-1</fullName>
    </recommendedName>
</protein>
<dbReference type="EMBL" id="AF172090">
    <property type="protein sequence ID" value="AAD48874.1"/>
    <property type="molecule type" value="mRNA"/>
</dbReference>
<dbReference type="EMBL" id="AF172091">
    <property type="protein sequence ID" value="AAD48875.1"/>
    <property type="status" value="ALT_SEQ"/>
    <property type="molecule type" value="mRNA"/>
</dbReference>
<dbReference type="EMBL" id="BX284603">
    <property type="protein sequence ID" value="CAA22093.3"/>
    <property type="molecule type" value="Genomic_DNA"/>
</dbReference>
<dbReference type="EMBL" id="BX284603">
    <property type="protein sequence ID" value="CAC70124.2"/>
    <property type="molecule type" value="Genomic_DNA"/>
</dbReference>
<dbReference type="PIR" id="T27393">
    <property type="entry name" value="T27393"/>
</dbReference>
<dbReference type="RefSeq" id="NP_001022941.1">
    <property type="nucleotide sequence ID" value="NM_001027770.2"/>
</dbReference>
<dbReference type="RefSeq" id="NP_001367008.1">
    <molecule id="G5EFY5-2"/>
    <property type="nucleotide sequence ID" value="NM_001379944.1"/>
</dbReference>
<dbReference type="RefSeq" id="NP_001369824.1">
    <molecule id="G5EFY5-1"/>
    <property type="nucleotide sequence ID" value="NM_001383007.2"/>
</dbReference>
<dbReference type="RefSeq" id="NP_499575.3">
    <property type="nucleotide sequence ID" value="NM_067174.4"/>
</dbReference>
<dbReference type="SMR" id="G5EFY5"/>
<dbReference type="FunCoup" id="G5EFY5">
    <property type="interactions" value="130"/>
</dbReference>
<dbReference type="IntAct" id="G5EFY5">
    <property type="interactions" value="1"/>
</dbReference>
<dbReference type="STRING" id="6239.Y75B8A.2a.1"/>
<dbReference type="PaxDb" id="6239-Y75B8A.2a"/>
<dbReference type="EnsemblMetazoa" id="Y75B8A.2a.1">
    <molecule id="G5EFY5-1"/>
    <property type="protein sequence ID" value="Y75B8A.2a.1"/>
    <property type="gene ID" value="WBGene00003779"/>
</dbReference>
<dbReference type="EnsemblMetazoa" id="Y75B8A.2b.1">
    <molecule id="G5EFY5-2"/>
    <property type="protein sequence ID" value="Y75B8A.2b.1"/>
    <property type="gene ID" value="WBGene00003779"/>
</dbReference>
<dbReference type="GeneID" id="176641"/>
<dbReference type="AGR" id="WB:WBGene00003779"/>
<dbReference type="WormBase" id="Y75B8A.2a">
    <molecule id="G5EFY5-1"/>
    <property type="protein sequence ID" value="CE51986"/>
    <property type="gene ID" value="WBGene00003779"/>
    <property type="gene designation" value="nob-1"/>
</dbReference>
<dbReference type="WormBase" id="Y75B8A.2b">
    <molecule id="G5EFY5-2"/>
    <property type="protein sequence ID" value="CE52032"/>
    <property type="gene ID" value="WBGene00003779"/>
    <property type="gene designation" value="nob-1"/>
</dbReference>
<dbReference type="eggNOG" id="KOG0487">
    <property type="taxonomic scope" value="Eukaryota"/>
</dbReference>
<dbReference type="HOGENOM" id="CLU_1190784_0_0_1"/>
<dbReference type="InParanoid" id="G5EFY5"/>
<dbReference type="OrthoDB" id="6159439at2759"/>
<dbReference type="PhylomeDB" id="G5EFY5"/>
<dbReference type="PRO" id="PR:G5EFY5"/>
<dbReference type="Proteomes" id="UP000001940">
    <property type="component" value="Chromosome III"/>
</dbReference>
<dbReference type="Bgee" id="WBGene00003779">
    <property type="expression patterns" value="Expressed in embryo and 3 other cell types or tissues"/>
</dbReference>
<dbReference type="ExpressionAtlas" id="G5EFY5">
    <property type="expression patterns" value="baseline and differential"/>
</dbReference>
<dbReference type="GO" id="GO:0005634">
    <property type="term" value="C:nucleus"/>
    <property type="evidence" value="ECO:0000314"/>
    <property type="project" value="UniProtKB"/>
</dbReference>
<dbReference type="GO" id="GO:0000981">
    <property type="term" value="F:DNA-binding transcription factor activity, RNA polymerase II-specific"/>
    <property type="evidence" value="ECO:0007669"/>
    <property type="project" value="InterPro"/>
</dbReference>
<dbReference type="GO" id="GO:0043565">
    <property type="term" value="F:sequence-specific DNA binding"/>
    <property type="evidence" value="ECO:0000314"/>
    <property type="project" value="WormBase"/>
</dbReference>
<dbReference type="GO" id="GO:0009952">
    <property type="term" value="P:anterior/posterior pattern specification"/>
    <property type="evidence" value="ECO:0000315"/>
    <property type="project" value="WormBase"/>
</dbReference>
<dbReference type="GO" id="GO:0010172">
    <property type="term" value="P:embryonic body morphogenesis"/>
    <property type="evidence" value="ECO:0000315"/>
    <property type="project" value="WormBase"/>
</dbReference>
<dbReference type="GO" id="GO:0009880">
    <property type="term" value="P:embryonic pattern specification"/>
    <property type="evidence" value="ECO:0000315"/>
    <property type="project" value="WormBase"/>
</dbReference>
<dbReference type="GO" id="GO:0045138">
    <property type="term" value="P:nematode male tail tip morphogenesis"/>
    <property type="evidence" value="ECO:0000315"/>
    <property type="project" value="WormBase"/>
</dbReference>
<dbReference type="GO" id="GO:1902895">
    <property type="term" value="P:positive regulation of miRNA transcription"/>
    <property type="evidence" value="ECO:0000315"/>
    <property type="project" value="UniProtKB"/>
</dbReference>
<dbReference type="GO" id="GO:0110039">
    <property type="term" value="P:positive regulation of nematode male tail tip morphogenesis"/>
    <property type="evidence" value="ECO:0000315"/>
    <property type="project" value="UniProtKB"/>
</dbReference>
<dbReference type="GO" id="GO:0012501">
    <property type="term" value="P:programmed cell death"/>
    <property type="evidence" value="ECO:0000315"/>
    <property type="project" value="UniProtKB"/>
</dbReference>
<dbReference type="GO" id="GO:0009786">
    <property type="term" value="P:regulation of asymmetric cell division"/>
    <property type="evidence" value="ECO:0000315"/>
    <property type="project" value="WormBase"/>
</dbReference>
<dbReference type="CDD" id="cd00086">
    <property type="entry name" value="homeodomain"/>
    <property type="match status" value="1"/>
</dbReference>
<dbReference type="Gene3D" id="1.10.10.60">
    <property type="entry name" value="Homeodomain-like"/>
    <property type="match status" value="1"/>
</dbReference>
<dbReference type="InterPro" id="IPR001356">
    <property type="entry name" value="HD"/>
</dbReference>
<dbReference type="InterPro" id="IPR020479">
    <property type="entry name" value="HD_metazoa"/>
</dbReference>
<dbReference type="InterPro" id="IPR017970">
    <property type="entry name" value="Homeobox_CS"/>
</dbReference>
<dbReference type="InterPro" id="IPR009057">
    <property type="entry name" value="Homeodomain-like_sf"/>
</dbReference>
<dbReference type="InterPro" id="IPR046333">
    <property type="entry name" value="HXA10/ABDB-like"/>
</dbReference>
<dbReference type="PANTHER" id="PTHR45874">
    <property type="entry name" value="HOMEOBOX PROTEIN ABDOMINAL-B"/>
    <property type="match status" value="1"/>
</dbReference>
<dbReference type="PANTHER" id="PTHR45874:SF8">
    <property type="entry name" value="PROTEIN CBG23031"/>
    <property type="match status" value="1"/>
</dbReference>
<dbReference type="Pfam" id="PF00046">
    <property type="entry name" value="Homeodomain"/>
    <property type="match status" value="1"/>
</dbReference>
<dbReference type="PRINTS" id="PR00024">
    <property type="entry name" value="HOMEOBOX"/>
</dbReference>
<dbReference type="SMART" id="SM00389">
    <property type="entry name" value="HOX"/>
    <property type="match status" value="1"/>
</dbReference>
<dbReference type="SUPFAM" id="SSF46689">
    <property type="entry name" value="Homeodomain-like"/>
    <property type="match status" value="1"/>
</dbReference>
<dbReference type="PROSITE" id="PS00027">
    <property type="entry name" value="HOMEOBOX_1"/>
    <property type="match status" value="1"/>
</dbReference>
<dbReference type="PROSITE" id="PS50071">
    <property type="entry name" value="HOMEOBOX_2"/>
    <property type="match status" value="1"/>
</dbReference>
<organism evidence="14">
    <name type="scientific">Caenorhabditis elegans</name>
    <dbReference type="NCBI Taxonomy" id="6239"/>
    <lineage>
        <taxon>Eukaryota</taxon>
        <taxon>Metazoa</taxon>
        <taxon>Ecdysozoa</taxon>
        <taxon>Nematoda</taxon>
        <taxon>Chromadorea</taxon>
        <taxon>Rhabditida</taxon>
        <taxon>Rhabditina</taxon>
        <taxon>Rhabditomorpha</taxon>
        <taxon>Rhabditoidea</taxon>
        <taxon>Rhabditidae</taxon>
        <taxon>Peloderinae</taxon>
        <taxon>Caenorhabditis</taxon>
    </lineage>
</organism>
<name>NOB1_CAEEL</name>
<evidence type="ECO:0000255" key="1">
    <source>
        <dbReference type="PROSITE-ProRule" id="PRU00108"/>
    </source>
</evidence>
<evidence type="ECO:0000255" key="2">
    <source>
        <dbReference type="RuleBase" id="RU000682"/>
    </source>
</evidence>
<evidence type="ECO:0000256" key="3">
    <source>
        <dbReference type="SAM" id="MobiDB-lite"/>
    </source>
</evidence>
<evidence type="ECO:0000269" key="4">
    <source>
    </source>
</evidence>
<evidence type="ECO:0000269" key="5">
    <source>
    </source>
</evidence>
<evidence type="ECO:0000269" key="6">
    <source>
    </source>
</evidence>
<evidence type="ECO:0000269" key="7">
    <source>
    </source>
</evidence>
<evidence type="ECO:0000269" key="8">
    <source>
    </source>
</evidence>
<evidence type="ECO:0000269" key="9">
    <source>
    </source>
</evidence>
<evidence type="ECO:0000269" key="10">
    <source>
    </source>
</evidence>
<evidence type="ECO:0000305" key="11"/>
<evidence type="ECO:0000312" key="12">
    <source>
        <dbReference type="EMBL" id="AAD48874.1"/>
    </source>
</evidence>
<evidence type="ECO:0000312" key="13">
    <source>
        <dbReference type="EMBL" id="AAD48875.1"/>
    </source>
</evidence>
<evidence type="ECO:0000312" key="14">
    <source>
        <dbReference type="Proteomes" id="UP000001940"/>
    </source>
</evidence>
<evidence type="ECO:0000312" key="15">
    <source>
        <dbReference type="WormBase" id="Y75B8A.2a"/>
    </source>
</evidence>
<evidence type="ECO:0000312" key="16">
    <source>
        <dbReference type="WormBase" id="Y75B8A.2b"/>
    </source>
</evidence>
<accession>G5EFY5</accession>
<accession>G5EGL1</accession>
<accession>Q7K756</accession>
<accession>Q7KKJ1</accession>
<reference evidence="11" key="1">
    <citation type="journal article" date="2000" name="Proc. Natl. Acad. Sci. U.S.A.">
        <title>Caenorhabditis elegans embryonic axial patterning requires two recently discovered posterior-group Hox genes.</title>
        <authorList>
            <person name="Van Auken K."/>
            <person name="Weaver D.C."/>
            <person name="Edgar L.G."/>
            <person name="Wood W.B."/>
        </authorList>
    </citation>
    <scope>NUCLEOTIDE SEQUENCE [MRNA]</scope>
    <scope>FUNCTION</scope>
    <scope>DISRUPTION PHENOTYPE</scope>
    <source>
        <strain evidence="12 13">Bristol N2</strain>
    </source>
</reference>
<reference evidence="14" key="2">
    <citation type="journal article" date="1998" name="Science">
        <title>Genome sequence of the nematode C. elegans: a platform for investigating biology.</title>
        <authorList>
            <consortium name="The C. elegans sequencing consortium"/>
        </authorList>
    </citation>
    <scope>NUCLEOTIDE SEQUENCE [LARGE SCALE GENOMIC DNA]</scope>
    <source>
        <strain evidence="14">Bristol N2</strain>
    </source>
</reference>
<reference evidence="11" key="3">
    <citation type="journal article" date="2004" name="Mol. Cell. Biol.">
        <title>The Caenorhabditis elegans nuclear receptor gene nhr-25 regulates epidermal cell development.</title>
        <authorList>
            <person name="Chen Z."/>
            <person name="Eastburn D.J."/>
            <person name="Han M."/>
        </authorList>
    </citation>
    <scope>FUNCTION</scope>
    <scope>INTERACTION WITH NHR-25</scope>
</reference>
<reference evidence="11" key="4">
    <citation type="journal article" date="2005" name="J. Biol. Chem.">
        <title>Caenorhabditis elegans geminin homologue participates in cell cycle regulation and germ line development.</title>
        <authorList>
            <person name="Yanagi K."/>
            <person name="Mizuno T."/>
            <person name="Tsuyama T."/>
            <person name="Tada S."/>
            <person name="Iida Y."/>
            <person name="Sugimoto A."/>
            <person name="Eki T."/>
            <person name="Enomoto T."/>
            <person name="Hanaoka F."/>
        </authorList>
    </citation>
    <scope>INTERACTION WITH GMN-1</scope>
</reference>
<reference evidence="11" key="5">
    <citation type="journal article" date="2006" name="Dev. Cell">
        <title>Wnt signaling and a Hox protein cooperatively regulate psa-3/Meis to determine daughter cell fate after asymmetric cell division in C. elegans.</title>
        <authorList>
            <person name="Arata Y."/>
            <person name="Kouike H."/>
            <person name="Zhang Y."/>
            <person name="Herman M.A."/>
            <person name="Okano H."/>
            <person name="Sawa H."/>
        </authorList>
    </citation>
    <scope>FUNCTION</scope>
    <scope>INTERACTION WITH CEH-20</scope>
</reference>
<reference evidence="11" key="6">
    <citation type="journal article" date="2010" name="PLoS Genet.">
        <title>A negative regulatory loop between microRNA and Hox gene controls posterior identities in Caenorhabditis elegans.</title>
        <authorList>
            <person name="Zhao Z."/>
            <person name="Boyle T.J."/>
            <person name="Liu Z."/>
            <person name="Murray J.I."/>
            <person name="Wood W.B."/>
            <person name="Waterston R.H."/>
        </authorList>
    </citation>
    <scope>FUNCTION</scope>
    <scope>DEVELOPMENTAL STAGE</scope>
    <scope>INDUCTION BY MIR-57 (ISOFORM B)</scope>
    <scope>DISRUPTION PHENOTYPE</scope>
</reference>
<reference evidence="11" key="7">
    <citation type="journal article" date="2011" name="PLoS Genet.">
        <title>A bow-tie genetic architecture for morphogenesis suggested by a genome-wide RNAi screen in Caenorhabditis elegans.</title>
        <authorList>
            <person name="Nelson M.D."/>
            <person name="Zhou E."/>
            <person name="Kiontke K."/>
            <person name="Fradin H."/>
            <person name="Maldonado G."/>
            <person name="Martin D."/>
            <person name="Shah K."/>
            <person name="Fitch D.H."/>
        </authorList>
    </citation>
    <scope>FUNCTION</scope>
    <scope>DEVELOPMENTAL STAGE</scope>
    <scope>DISRUPTION PHENOTYPE</scope>
</reference>
<reference evidence="11" key="8">
    <citation type="journal article" date="2016" name="Cell Death Differ.">
        <title>Transcriptional control of non-apoptotic developmental cell death in C. elegans.</title>
        <authorList>
            <person name="Malin J.A."/>
            <person name="Kinet M.J."/>
            <person name="Abraham M.C."/>
            <person name="Blum E.S."/>
            <person name="Shaham S."/>
        </authorList>
    </citation>
    <scope>FUNCTION</scope>
    <scope>DEVELOPMENTAL STAGE</scope>
</reference>
<gene>
    <name evidence="15" type="primary">nob-1</name>
    <name evidence="15" type="ORF">Y75B8A.2</name>
</gene>
<feature type="chain" id="PRO_0000453033" description="Homeobox protein nob-1">
    <location>
        <begin position="1"/>
        <end position="243"/>
    </location>
</feature>
<feature type="DNA-binding region" description="Homeobox" evidence="1">
    <location>
        <begin position="162"/>
        <end position="221"/>
    </location>
</feature>
<feature type="region of interest" description="Disordered" evidence="3">
    <location>
        <begin position="1"/>
        <end position="23"/>
    </location>
</feature>
<feature type="region of interest" description="Disordered" evidence="3">
    <location>
        <begin position="40"/>
        <end position="67"/>
    </location>
</feature>
<feature type="compositionally biased region" description="Polar residues" evidence="3">
    <location>
        <begin position="1"/>
        <end position="12"/>
    </location>
</feature>
<feature type="splice variant" id="VSP_061102" description="In isoform b." evidence="11">
    <location>
        <begin position="1"/>
        <end position="151"/>
    </location>
</feature>
<feature type="sequence conflict" description="In Ref. 1; AAD48874." evidence="11" ref="1">
    <location>
        <begin position="108"/>
        <end position="132"/>
    </location>
</feature>
<proteinExistence type="evidence at protein level"/>